<protein>
    <recommendedName>
        <fullName>Uncharacterized protein C6</fullName>
    </recommendedName>
</protein>
<name>VC06_SWPVK</name>
<gene>
    <name type="ORF">C6L</name>
</gene>
<reference key="1">
    <citation type="journal article" date="1993" name="Virology">
        <title>DNA sequence analysis of conserved and unique regions of swinepox virus: identification of genetic elements supporting phenotypic observations including a novel G protein-coupled receptor homologue.</title>
        <authorList>
            <person name="Massung R.F."/>
            <person name="Jayarama V."/>
            <person name="Moyer R.W."/>
        </authorList>
    </citation>
    <scope>NUCLEOTIDE SEQUENCE</scope>
</reference>
<proteinExistence type="inferred from homology"/>
<organismHost>
    <name type="scientific">Sus scrofa</name>
    <name type="common">Pig</name>
    <dbReference type="NCBI Taxonomy" id="9823"/>
</organismHost>
<dbReference type="EMBL" id="L22013">
    <property type="protein sequence ID" value="AAC37865.1"/>
    <property type="molecule type" value="Unassigned_RNA"/>
</dbReference>
<dbReference type="SMR" id="P32226"/>
<dbReference type="KEGG" id="vg:932480"/>
<dbReference type="GO" id="GO:0004896">
    <property type="term" value="F:cytokine receptor activity"/>
    <property type="evidence" value="ECO:0007669"/>
    <property type="project" value="InterPro"/>
</dbReference>
<dbReference type="GO" id="GO:0060333">
    <property type="term" value="P:type II interferon-mediated signaling pathway"/>
    <property type="evidence" value="ECO:0007669"/>
    <property type="project" value="InterPro"/>
</dbReference>
<dbReference type="Gene3D" id="2.60.40.10">
    <property type="entry name" value="Immunoglobulins"/>
    <property type="match status" value="2"/>
</dbReference>
<dbReference type="InterPro" id="IPR036116">
    <property type="entry name" value="FN3_sf"/>
</dbReference>
<dbReference type="InterPro" id="IPR021126">
    <property type="entry name" value="IFN_gamma_rc_D2_pox/mammal"/>
</dbReference>
<dbReference type="InterPro" id="IPR013783">
    <property type="entry name" value="Ig-like_fold"/>
</dbReference>
<dbReference type="Pfam" id="PF07140">
    <property type="entry name" value="IFNGR1_D2"/>
    <property type="match status" value="1"/>
</dbReference>
<dbReference type="Pfam" id="PF20634">
    <property type="entry name" value="IFNGR1_transm"/>
    <property type="match status" value="1"/>
</dbReference>
<dbReference type="SUPFAM" id="SSF49265">
    <property type="entry name" value="Fibronectin type III"/>
    <property type="match status" value="2"/>
</dbReference>
<organism>
    <name type="scientific">Swinepox virus (strain Kasza)</name>
    <name type="common">SWPV</name>
    <dbReference type="NCBI Taxonomy" id="10277"/>
    <lineage>
        <taxon>Viruses</taxon>
        <taxon>Varidnaviria</taxon>
        <taxon>Bamfordvirae</taxon>
        <taxon>Nucleocytoviricota</taxon>
        <taxon>Pokkesviricetes</taxon>
        <taxon>Chitovirales</taxon>
        <taxon>Poxviridae</taxon>
        <taxon>Chordopoxvirinae</taxon>
        <taxon>Suipoxvirus</taxon>
        <taxon>Swinepox virus</taxon>
    </lineage>
</organism>
<accession>P32226</accession>
<sequence>MHFIFIILSLSFVVNADVFPSSVTLSSNDFDTIIKWDNNVISYDVELMQYSHDEWRTVCTNSLGYCNLTNSDIDNDDETWVRFKYENKTSNEHNIGRVCEIVQITSPIVNMTRDGSIILLDIHHPMTYDNQYYIYNNITLCGFEFIYEATFIINDTIIPYSIDNQYCDDVHCLFYFISQEPVCVYVMGMEQYYEFGPKKTDNSTRVCVDGLIPRKIDTYFIKDFDDIDRVNNRLYRVVSDKYESNISSKFMHLYNNILSSFKLILQELMVNTEQ</sequence>
<evidence type="ECO:0000305" key="1"/>
<feature type="chain" id="PRO_0000048488" description="Uncharacterized protein C6">
    <location>
        <begin position="1"/>
        <end position="274"/>
    </location>
</feature>
<comment type="similarity">
    <text evidence="1">Belongs to the type II cytokine receptor family.</text>
</comment>